<reference key="1">
    <citation type="submission" date="2003-10" db="EMBL/GenBank/DDBJ databases">
        <title>The complete genome sequence of the alkaliphilic Bacillus clausii KSM-K16.</title>
        <authorList>
            <person name="Takaki Y."/>
            <person name="Kageyama Y."/>
            <person name="Shimamura S."/>
            <person name="Suzuki H."/>
            <person name="Nishi S."/>
            <person name="Hatada Y."/>
            <person name="Kawai S."/>
            <person name="Ito S."/>
            <person name="Horikoshi K."/>
        </authorList>
    </citation>
    <scope>NUCLEOTIDE SEQUENCE [LARGE SCALE GENOMIC DNA]</scope>
    <source>
        <strain>KSM-K16</strain>
    </source>
</reference>
<keyword id="KW-1185">Reference proteome</keyword>
<sequence>MRPIIEFCLSNLASGSHDAMEELEKDPNLDIIEYGCLNHCGTCALDHFALVNGEYIAGDTPEELVSNIYKYLEENPMF</sequence>
<proteinExistence type="inferred from homology"/>
<name>Y2936_SHOC1</name>
<gene>
    <name type="ordered locus">ABC2936</name>
</gene>
<protein>
    <recommendedName>
        <fullName evidence="1">UPF0349 protein ABC2936</fullName>
    </recommendedName>
</protein>
<accession>Q5WDU0</accession>
<feature type="chain" id="PRO_0000165888" description="UPF0349 protein ABC2936">
    <location>
        <begin position="1"/>
        <end position="78"/>
    </location>
</feature>
<dbReference type="EMBL" id="AP006627">
    <property type="protein sequence ID" value="BAD65470.1"/>
    <property type="molecule type" value="Genomic_DNA"/>
</dbReference>
<dbReference type="RefSeq" id="WP_011247778.1">
    <property type="nucleotide sequence ID" value="NC_006582.1"/>
</dbReference>
<dbReference type="SMR" id="Q5WDU0"/>
<dbReference type="STRING" id="66692.ABC2936"/>
<dbReference type="KEGG" id="bcl:ABC2936"/>
<dbReference type="eggNOG" id="COG4844">
    <property type="taxonomic scope" value="Bacteria"/>
</dbReference>
<dbReference type="HOGENOM" id="CLU_182025_0_0_9"/>
<dbReference type="OrthoDB" id="1684419at2"/>
<dbReference type="Proteomes" id="UP000001168">
    <property type="component" value="Chromosome"/>
</dbReference>
<dbReference type="HAMAP" id="MF_01542">
    <property type="entry name" value="UPF0349"/>
    <property type="match status" value="1"/>
</dbReference>
<dbReference type="InterPro" id="IPR009910">
    <property type="entry name" value="DUF1450"/>
</dbReference>
<dbReference type="InterPro" id="IPR022916">
    <property type="entry name" value="UPF0349"/>
</dbReference>
<dbReference type="NCBIfam" id="NF010190">
    <property type="entry name" value="PRK13669.1"/>
    <property type="match status" value="1"/>
</dbReference>
<dbReference type="Pfam" id="PF07293">
    <property type="entry name" value="DUF1450"/>
    <property type="match status" value="1"/>
</dbReference>
<evidence type="ECO:0000255" key="1">
    <source>
        <dbReference type="HAMAP-Rule" id="MF_01542"/>
    </source>
</evidence>
<organism>
    <name type="scientific">Shouchella clausii (strain KSM-K16)</name>
    <name type="common">Alkalihalobacillus clausii</name>
    <dbReference type="NCBI Taxonomy" id="66692"/>
    <lineage>
        <taxon>Bacteria</taxon>
        <taxon>Bacillati</taxon>
        <taxon>Bacillota</taxon>
        <taxon>Bacilli</taxon>
        <taxon>Bacillales</taxon>
        <taxon>Bacillaceae</taxon>
        <taxon>Shouchella</taxon>
    </lineage>
</organism>
<comment type="similarity">
    <text evidence="1">Belongs to the UPF0349 family.</text>
</comment>